<evidence type="ECO:0000255" key="1">
    <source>
        <dbReference type="HAMAP-Rule" id="MF_01350"/>
    </source>
</evidence>
<proteinExistence type="inferred from homology"/>
<feature type="chain" id="PRO_1000214838" description="NADH-quinone oxidoreductase subunit H">
    <location>
        <begin position="1"/>
        <end position="390"/>
    </location>
</feature>
<feature type="transmembrane region" description="Helical" evidence="1">
    <location>
        <begin position="4"/>
        <end position="24"/>
    </location>
</feature>
<feature type="transmembrane region" description="Helical" evidence="1">
    <location>
        <begin position="78"/>
        <end position="98"/>
    </location>
</feature>
<feature type="transmembrane region" description="Helical" evidence="1">
    <location>
        <begin position="120"/>
        <end position="140"/>
    </location>
</feature>
<feature type="transmembrane region" description="Helical" evidence="1">
    <location>
        <begin position="157"/>
        <end position="177"/>
    </location>
</feature>
<feature type="transmembrane region" description="Helical" evidence="1">
    <location>
        <begin position="191"/>
        <end position="211"/>
    </location>
</feature>
<feature type="transmembrane region" description="Helical" evidence="1">
    <location>
        <begin position="247"/>
        <end position="266"/>
    </location>
</feature>
<feature type="transmembrane region" description="Helical" evidence="1">
    <location>
        <begin position="278"/>
        <end position="298"/>
    </location>
</feature>
<feature type="transmembrane region" description="Helical" evidence="1">
    <location>
        <begin position="315"/>
        <end position="337"/>
    </location>
</feature>
<feature type="transmembrane region" description="Helical" evidence="1">
    <location>
        <begin position="341"/>
        <end position="360"/>
    </location>
</feature>
<sequence>MPDWLLTLLITVVKAVAVILALLTTFAYMTLVERKLLGRFQIRVGPNRVGPMGLLQPAADAIKSIFKEDLQVTLADKLVYTLAPIIAIGMALTAFGGIPAGPEGSLFGENPWVYNLDAGVLALLALTSMGVYGIFLGGWASGSKYPMLGGLRSSAQMISYELGMGLSILGLLMLVGSTRFTDIVLWQGANGWMILFQSLGFALFLISSFAETNRTPFDLVEAEQELVAGYLTEYSAIKWALFQMAEYVNMITASALMSTLFFGGWRGPGFLNGIIPGIADIPILWLVVKIGFFLFVFIWVRATLPRLRYDQLMRFGWKLLLPLALFNTMLVAGYIAFFSSWGWWPLALLSLLGLTALLALSDTVRQLWNAPMTRRETELPPVPTRSAGGD</sequence>
<keyword id="KW-1003">Cell membrane</keyword>
<keyword id="KW-0472">Membrane</keyword>
<keyword id="KW-0520">NAD</keyword>
<keyword id="KW-0874">Quinone</keyword>
<keyword id="KW-1185">Reference proteome</keyword>
<keyword id="KW-1278">Translocase</keyword>
<keyword id="KW-0812">Transmembrane</keyword>
<keyword id="KW-1133">Transmembrane helix</keyword>
<keyword id="KW-0830">Ubiquinone</keyword>
<reference key="1">
    <citation type="journal article" date="2009" name="PLoS Genet.">
        <title>Alliance of proteomics and genomics to unravel the specificities of Sahara bacterium Deinococcus deserti.</title>
        <authorList>
            <person name="de Groot A."/>
            <person name="Dulermo R."/>
            <person name="Ortet P."/>
            <person name="Blanchard L."/>
            <person name="Guerin P."/>
            <person name="Fernandez B."/>
            <person name="Vacherie B."/>
            <person name="Dossat C."/>
            <person name="Jolivet E."/>
            <person name="Siguier P."/>
            <person name="Chandler M."/>
            <person name="Barakat M."/>
            <person name="Dedieu A."/>
            <person name="Barbe V."/>
            <person name="Heulin T."/>
            <person name="Sommer S."/>
            <person name="Achouak W."/>
            <person name="Armengaud J."/>
        </authorList>
    </citation>
    <scope>NUCLEOTIDE SEQUENCE [LARGE SCALE GENOMIC DNA]</scope>
    <source>
        <strain>DSM 17065 / CIP 109153 / LMG 22923 / VCD115</strain>
    </source>
</reference>
<gene>
    <name evidence="1" type="primary">nuoH</name>
    <name type="ordered locus">Deide_05160</name>
</gene>
<name>NUOH_DEIDV</name>
<protein>
    <recommendedName>
        <fullName evidence="1">NADH-quinone oxidoreductase subunit H</fullName>
        <ecNumber evidence="1">7.1.1.-</ecNumber>
    </recommendedName>
    <alternativeName>
        <fullName evidence="1">NADH dehydrogenase I subunit H</fullName>
    </alternativeName>
    <alternativeName>
        <fullName evidence="1">NDH-1 subunit H</fullName>
    </alternativeName>
</protein>
<dbReference type="EC" id="7.1.1.-" evidence="1"/>
<dbReference type="EMBL" id="CP001114">
    <property type="protein sequence ID" value="ACO45352.1"/>
    <property type="molecule type" value="Genomic_DNA"/>
</dbReference>
<dbReference type="RefSeq" id="WP_012692475.1">
    <property type="nucleotide sequence ID" value="NC_012526.1"/>
</dbReference>
<dbReference type="SMR" id="C1D0H8"/>
<dbReference type="STRING" id="546414.Deide_05160"/>
<dbReference type="PaxDb" id="546414-Deide_05160"/>
<dbReference type="KEGG" id="ddr:Deide_05160"/>
<dbReference type="eggNOG" id="COG1005">
    <property type="taxonomic scope" value="Bacteria"/>
</dbReference>
<dbReference type="HOGENOM" id="CLU_015134_0_0_0"/>
<dbReference type="OrthoDB" id="9803734at2"/>
<dbReference type="Proteomes" id="UP000002208">
    <property type="component" value="Chromosome"/>
</dbReference>
<dbReference type="GO" id="GO:0005886">
    <property type="term" value="C:plasma membrane"/>
    <property type="evidence" value="ECO:0007669"/>
    <property type="project" value="UniProtKB-SubCell"/>
</dbReference>
<dbReference type="GO" id="GO:0003954">
    <property type="term" value="F:NADH dehydrogenase activity"/>
    <property type="evidence" value="ECO:0007669"/>
    <property type="project" value="TreeGrafter"/>
</dbReference>
<dbReference type="GO" id="GO:0016655">
    <property type="term" value="F:oxidoreductase activity, acting on NAD(P)H, quinone or similar compound as acceptor"/>
    <property type="evidence" value="ECO:0007669"/>
    <property type="project" value="UniProtKB-UniRule"/>
</dbReference>
<dbReference type="GO" id="GO:0048038">
    <property type="term" value="F:quinone binding"/>
    <property type="evidence" value="ECO:0007669"/>
    <property type="project" value="UniProtKB-KW"/>
</dbReference>
<dbReference type="GO" id="GO:0009060">
    <property type="term" value="P:aerobic respiration"/>
    <property type="evidence" value="ECO:0007669"/>
    <property type="project" value="TreeGrafter"/>
</dbReference>
<dbReference type="HAMAP" id="MF_01350">
    <property type="entry name" value="NDH1_NuoH"/>
    <property type="match status" value="1"/>
</dbReference>
<dbReference type="InterPro" id="IPR001694">
    <property type="entry name" value="NADH_UbQ_OxRdtase_su1/FPO"/>
</dbReference>
<dbReference type="InterPro" id="IPR018086">
    <property type="entry name" value="NADH_UbQ_OxRdtase_su1_CS"/>
</dbReference>
<dbReference type="NCBIfam" id="NF004741">
    <property type="entry name" value="PRK06076.1-2"/>
    <property type="match status" value="1"/>
</dbReference>
<dbReference type="PANTHER" id="PTHR11432">
    <property type="entry name" value="NADH DEHYDROGENASE SUBUNIT 1"/>
    <property type="match status" value="1"/>
</dbReference>
<dbReference type="PANTHER" id="PTHR11432:SF3">
    <property type="entry name" value="NADH-UBIQUINONE OXIDOREDUCTASE CHAIN 1"/>
    <property type="match status" value="1"/>
</dbReference>
<dbReference type="Pfam" id="PF00146">
    <property type="entry name" value="NADHdh"/>
    <property type="match status" value="1"/>
</dbReference>
<dbReference type="PROSITE" id="PS00667">
    <property type="entry name" value="COMPLEX1_ND1_1"/>
    <property type="match status" value="1"/>
</dbReference>
<dbReference type="PROSITE" id="PS00668">
    <property type="entry name" value="COMPLEX1_ND1_2"/>
    <property type="match status" value="1"/>
</dbReference>
<comment type="function">
    <text evidence="1">NDH-1 shuttles electrons from NADH, via FMN and iron-sulfur (Fe-S) centers, to quinones in the respiratory chain. The immediate electron acceptor for the enzyme in this species is believed to be ubiquinone. Couples the redox reaction to proton translocation (for every two electrons transferred, four hydrogen ions are translocated across the cytoplasmic membrane), and thus conserves the redox energy in a proton gradient. This subunit may bind ubiquinone.</text>
</comment>
<comment type="catalytic activity">
    <reaction evidence="1">
        <text>a quinone + NADH + 5 H(+)(in) = a quinol + NAD(+) + 4 H(+)(out)</text>
        <dbReference type="Rhea" id="RHEA:57888"/>
        <dbReference type="ChEBI" id="CHEBI:15378"/>
        <dbReference type="ChEBI" id="CHEBI:24646"/>
        <dbReference type="ChEBI" id="CHEBI:57540"/>
        <dbReference type="ChEBI" id="CHEBI:57945"/>
        <dbReference type="ChEBI" id="CHEBI:132124"/>
    </reaction>
</comment>
<comment type="subunit">
    <text evidence="1">NDH-1 is composed of 15 different subunits. Subunits NuoA, H, J, K, L, M, N constitute the membrane sector of the complex.</text>
</comment>
<comment type="subcellular location">
    <subcellularLocation>
        <location evidence="1">Cell membrane</location>
        <topology evidence="1">Multi-pass membrane protein</topology>
    </subcellularLocation>
</comment>
<comment type="similarity">
    <text evidence="1">Belongs to the complex I subunit 1 family.</text>
</comment>
<accession>C1D0H8</accession>
<organism>
    <name type="scientific">Deinococcus deserti (strain DSM 17065 / CIP 109153 / LMG 22923 / VCD115)</name>
    <dbReference type="NCBI Taxonomy" id="546414"/>
    <lineage>
        <taxon>Bacteria</taxon>
        <taxon>Thermotogati</taxon>
        <taxon>Deinococcota</taxon>
        <taxon>Deinococci</taxon>
        <taxon>Deinococcales</taxon>
        <taxon>Deinococcaceae</taxon>
        <taxon>Deinococcus</taxon>
    </lineage>
</organism>